<organism>
    <name type="scientific">Cupriavidus pinatubonensis (strain JMP 134 / LMG 1197)</name>
    <name type="common">Cupriavidus necator (strain JMP 134)</name>
    <dbReference type="NCBI Taxonomy" id="264198"/>
    <lineage>
        <taxon>Bacteria</taxon>
        <taxon>Pseudomonadati</taxon>
        <taxon>Pseudomonadota</taxon>
        <taxon>Betaproteobacteria</taxon>
        <taxon>Burkholderiales</taxon>
        <taxon>Burkholderiaceae</taxon>
        <taxon>Cupriavidus</taxon>
    </lineage>
</organism>
<proteinExistence type="inferred from homology"/>
<sequence length="810" mass="90726">MTEQRRSPNKRANKPPALSGLSSRTGRLPASALRPLVLAMAGLSVGAHAQMSSSAVPDIDQTESVVETAPEVPLAPPVSGELVPRLAEPAKTTQPGESPPAFVSGDRLTGYNERGVVLEGNAELRRGGAVVKGDKLTYDQDTDEAFAHGNARVSRGGALAVGPEARMKVEANEGYMLSPDYYFQQTGGTGKAERIDFIDKDRSVIKRATYTTCSPDNADWYFSARQLDLDSDREVGVAYGGVLHFFDVPIAGAPVFSFPLTDERRSGFLSPLFGYGSKSGLDVTLPYYFNIAPNRDLTLYPRIMTSRGFMLGGDYRYIGQGYSGRLRAEILPDDRQTNSNRWSYSFQHTQNLAKGLNAYLNLNRVSDDRYPDDLTRTVAQSTQRQYIQEGGVTYNWQDFTVLARVQKFQTLLPSGPSYEREPQLNGKYIRYDLGGFDVQVEADYTRFRIPLTSTGFQQPQGERMFVQPTISYPIVRPGWYATPKVIFNATQYQMEPQSNTPTAQNNFSRTVPTFSFDSGMTFERDAPTMSRVFGVNYLQTLEPRLFYVYTPFRDQSQFPLFDTVQSDFGYGQIFSENPFTGYDRVADNNKLTAGLTTRLIEADTGIERFRGTIAQRYDFSGQRVQINGTLPDPKAGSSDLLAATTIQLFRGYYLDAGIQYNPDSEHINYSNLAFAWRPEPRKLLNVGYRYRRATSVTDNTAIDQFEISGQWPITQRAYGIGRFAFDRNANQMVDALAGLEYAADCWVGRVVYQRYRNTTQGYTGRIFLQVEFRGLSKIGSNPLDILRLNVPGYEPVTAKPVPTTQFDHYE</sequence>
<feature type="signal peptide" evidence="1">
    <location>
        <begin position="1"/>
        <end position="49"/>
    </location>
</feature>
<feature type="chain" id="PRO_0000281631" description="LPS-assembly protein LptD">
    <location>
        <begin position="50"/>
        <end position="810"/>
    </location>
</feature>
<feature type="region of interest" description="Disordered" evidence="2">
    <location>
        <begin position="1"/>
        <end position="26"/>
    </location>
</feature>
<feature type="region of interest" description="Disordered" evidence="2">
    <location>
        <begin position="54"/>
        <end position="79"/>
    </location>
</feature>
<comment type="function">
    <text evidence="1">Together with LptE, is involved in the assembly of lipopolysaccharide (LPS) at the surface of the outer membrane.</text>
</comment>
<comment type="subunit">
    <text evidence="1">Component of the lipopolysaccharide transport and assembly complex. Interacts with LptE and LptA.</text>
</comment>
<comment type="subcellular location">
    <subcellularLocation>
        <location evidence="1">Cell outer membrane</location>
    </subcellularLocation>
</comment>
<comment type="similarity">
    <text evidence="1">Belongs to the LptD family.</text>
</comment>
<protein>
    <recommendedName>
        <fullName evidence="1">LPS-assembly protein LptD</fullName>
    </recommendedName>
</protein>
<evidence type="ECO:0000255" key="1">
    <source>
        <dbReference type="HAMAP-Rule" id="MF_01411"/>
    </source>
</evidence>
<evidence type="ECO:0000256" key="2">
    <source>
        <dbReference type="SAM" id="MobiDB-lite"/>
    </source>
</evidence>
<keyword id="KW-0998">Cell outer membrane</keyword>
<keyword id="KW-0472">Membrane</keyword>
<keyword id="KW-0732">Signal</keyword>
<dbReference type="EMBL" id="CP000090">
    <property type="protein sequence ID" value="AAZ59879.1"/>
    <property type="molecule type" value="Genomic_DNA"/>
</dbReference>
<dbReference type="SMR" id="Q475Q4"/>
<dbReference type="STRING" id="264198.Reut_A0497"/>
<dbReference type="KEGG" id="reu:Reut_A0497"/>
<dbReference type="eggNOG" id="COG1452">
    <property type="taxonomic scope" value="Bacteria"/>
</dbReference>
<dbReference type="HOGENOM" id="CLU_009039_0_0_4"/>
<dbReference type="OrthoDB" id="9760225at2"/>
<dbReference type="GO" id="GO:0009279">
    <property type="term" value="C:cell outer membrane"/>
    <property type="evidence" value="ECO:0007669"/>
    <property type="project" value="UniProtKB-SubCell"/>
</dbReference>
<dbReference type="GO" id="GO:1990351">
    <property type="term" value="C:transporter complex"/>
    <property type="evidence" value="ECO:0007669"/>
    <property type="project" value="TreeGrafter"/>
</dbReference>
<dbReference type="GO" id="GO:0043165">
    <property type="term" value="P:Gram-negative-bacterium-type cell outer membrane assembly"/>
    <property type="evidence" value="ECO:0007669"/>
    <property type="project" value="UniProtKB-UniRule"/>
</dbReference>
<dbReference type="GO" id="GO:0015920">
    <property type="term" value="P:lipopolysaccharide transport"/>
    <property type="evidence" value="ECO:0007669"/>
    <property type="project" value="InterPro"/>
</dbReference>
<dbReference type="Gene3D" id="2.60.450.10">
    <property type="entry name" value="Lipopolysaccharide (LPS) transport protein A like domain"/>
    <property type="match status" value="1"/>
</dbReference>
<dbReference type="HAMAP" id="MF_01411">
    <property type="entry name" value="LPS_assembly_LptD"/>
    <property type="match status" value="1"/>
</dbReference>
<dbReference type="InterPro" id="IPR020889">
    <property type="entry name" value="LipoPS_assembly_LptD"/>
</dbReference>
<dbReference type="InterPro" id="IPR050218">
    <property type="entry name" value="LptD"/>
</dbReference>
<dbReference type="InterPro" id="IPR007543">
    <property type="entry name" value="LptD_C"/>
</dbReference>
<dbReference type="PANTHER" id="PTHR30189">
    <property type="entry name" value="LPS-ASSEMBLY PROTEIN"/>
    <property type="match status" value="1"/>
</dbReference>
<dbReference type="PANTHER" id="PTHR30189:SF1">
    <property type="entry name" value="LPS-ASSEMBLY PROTEIN LPTD"/>
    <property type="match status" value="1"/>
</dbReference>
<dbReference type="Pfam" id="PF04453">
    <property type="entry name" value="LptD"/>
    <property type="match status" value="1"/>
</dbReference>
<reference key="1">
    <citation type="journal article" date="2010" name="PLoS ONE">
        <title>The complete multipartite genome sequence of Cupriavidus necator JMP134, a versatile pollutant degrader.</title>
        <authorList>
            <person name="Lykidis A."/>
            <person name="Perez-Pantoja D."/>
            <person name="Ledger T."/>
            <person name="Mavromatis K."/>
            <person name="Anderson I.J."/>
            <person name="Ivanova N.N."/>
            <person name="Hooper S.D."/>
            <person name="Lapidus A."/>
            <person name="Lucas S."/>
            <person name="Gonzalez B."/>
            <person name="Kyrpides N.C."/>
        </authorList>
    </citation>
    <scope>NUCLEOTIDE SEQUENCE [LARGE SCALE GENOMIC DNA]</scope>
    <source>
        <strain>JMP134 / LMG 1197</strain>
    </source>
</reference>
<gene>
    <name evidence="1" type="primary">lptD</name>
    <name type="synonym">imp</name>
    <name type="synonym">ostA</name>
    <name type="ordered locus">Reut_A0497</name>
</gene>
<accession>Q475Q4</accession>
<name>LPTD_CUPPJ</name>